<name>KR191_MOUSE</name>
<reference evidence="6 7" key="1">
    <citation type="journal article" date="2001" name="Development">
        <title>Overexpression of Hoxc13 in differentiating keratinocytes results in downregulation of a novel hair keratin gene cluster and alopecia.</title>
        <authorList>
            <person name="Tkatchenko A.V."/>
            <person name="Visconti R.P."/>
            <person name="Shang L."/>
            <person name="Papenbrock T."/>
            <person name="Pruett N.D."/>
            <person name="Ito T."/>
            <person name="Ogawa M."/>
            <person name="Awgulewitsch A."/>
        </authorList>
    </citation>
    <scope>NUCLEOTIDE SEQUENCE [MRNA]</scope>
    <scope>INDUCTION</scope>
    <source>
        <strain evidence="7">FVB/NJ</strain>
        <tissue evidence="3">Skin</tissue>
    </source>
</reference>
<reference evidence="6" key="2">
    <citation type="journal article" date="2004" name="J. Biol. Chem.">
        <title>Krtap16, characterization of a new hair keratin-associated protein (KAP) gene complex on mouse chromosome 16 and evidence for regulation by Hoxc13.</title>
        <authorList>
            <person name="Pruett N.D."/>
            <person name="Tkatchenko T.V."/>
            <person name="Jave-Suarez L."/>
            <person name="Jacobs D.F."/>
            <person name="Potter C.S."/>
            <person name="Tkatchenko A.V."/>
            <person name="Schweizer J."/>
            <person name="Awgulewitsch A."/>
        </authorList>
    </citation>
    <scope>TISSUE SPECIFICITY</scope>
</reference>
<reference evidence="6" key="3">
    <citation type="journal article" date="2007" name="Development">
        <title>Transcriptome and phenotypic analysis reveals Gata3-dependent signalling pathways in murine hair follicles.</title>
        <authorList>
            <person name="Kurek D."/>
            <person name="Garinis G.A."/>
            <person name="van Doorninck J.H."/>
            <person name="van der Wees J."/>
            <person name="Grosveld F.G."/>
        </authorList>
    </citation>
    <scope>INDUCTION</scope>
</reference>
<gene>
    <name type="primary">Krtap19-1</name>
    <name type="synonym">Krtap16-9</name>
    <name evidence="7" type="synonym">Krtap16.9</name>
</gene>
<comment type="function">
    <text evidence="6">In the hair cortex, hair keratin intermediate filaments are embedded in an interfilamentous matrix, consisting of hair keratin-associated proteins (KRTAP), which are essential for the formation of a rigid and resistant hair shaft through their extensive disulfide bond cross-linking with abundant cysteine residues of hair keratins. The matrix proteins include the high-sulfur and high-glycine-tyrosine keratins.</text>
</comment>
<comment type="subunit">
    <text evidence="1">Interacts with hair keratins.</text>
</comment>
<comment type="tissue specificity">
    <text evidence="4">Strong expression in narrowly defined pattern restricted to the lower and middle cortical regions of the hair shaft in both developing and cycling hair. During hair follicle regression (catagen), expression levels decrease until expression is no longer detectable in follicles at resting stage (telogen).</text>
</comment>
<comment type="induction">
    <text evidence="3 5">Expression in skin and hair follicle is regulated by HOXC13 and by GATA3.</text>
</comment>
<comment type="similarity">
    <text evidence="6">Belongs to the KRTAP type 19 family.</text>
</comment>
<sequence>MSYYSGYSGGLGYGYGSSFGGPGCGCNSIRRLGCGSGYGGFGYGSGYGGYGYGSDYGGYGYGSSYGGYGCGCRRPSCCGRYGFSNFY</sequence>
<keyword id="KW-0416">Keratin</keyword>
<keyword id="KW-1185">Reference proteome</keyword>
<keyword id="KW-0677">Repeat</keyword>
<feature type="chain" id="PRO_0000356218" description="Keratin-associated protein 19-1">
    <location>
        <begin position="1"/>
        <end position="87"/>
    </location>
</feature>
<feature type="region of interest" description="21 X 2 AA repeats of G-[YCGS]" evidence="2">
    <location>
        <begin position="6"/>
        <end position="72"/>
    </location>
</feature>
<protein>
    <recommendedName>
        <fullName>Keratin-associated protein 19-1</fullName>
    </recommendedName>
    <alternativeName>
        <fullName>Keratin-associated protein 16-9</fullName>
    </alternativeName>
    <alternativeName>
        <fullName evidence="7">Keratin-associated protein 16.9</fullName>
    </alternativeName>
</protein>
<organism>
    <name type="scientific">Mus musculus</name>
    <name type="common">Mouse</name>
    <dbReference type="NCBI Taxonomy" id="10090"/>
    <lineage>
        <taxon>Eukaryota</taxon>
        <taxon>Metazoa</taxon>
        <taxon>Chordata</taxon>
        <taxon>Craniata</taxon>
        <taxon>Vertebrata</taxon>
        <taxon>Euteleostomi</taxon>
        <taxon>Mammalia</taxon>
        <taxon>Eutheria</taxon>
        <taxon>Euarchontoglires</taxon>
        <taxon>Glires</taxon>
        <taxon>Rodentia</taxon>
        <taxon>Myomorpha</taxon>
        <taxon>Muroidea</taxon>
        <taxon>Muridae</taxon>
        <taxon>Murinae</taxon>
        <taxon>Mus</taxon>
        <taxon>Mus</taxon>
    </lineage>
</organism>
<evidence type="ECO:0000250" key="1"/>
<evidence type="ECO:0000255" key="2"/>
<evidence type="ECO:0000269" key="3">
    <source>
    </source>
</evidence>
<evidence type="ECO:0000269" key="4">
    <source>
    </source>
</evidence>
<evidence type="ECO:0000269" key="5">
    <source>
    </source>
</evidence>
<evidence type="ECO:0000305" key="6"/>
<evidence type="ECO:0000312" key="7">
    <source>
        <dbReference type="EMBL" id="AAK52897.1"/>
    </source>
</evidence>
<proteinExistence type="evidence at transcript level"/>
<accession>Q925H2</accession>
<dbReference type="EMBL" id="AF345299">
    <property type="protein sequence ID" value="AAK52897.1"/>
    <property type="molecule type" value="mRNA"/>
</dbReference>
<dbReference type="CCDS" id="CCDS49894.1"/>
<dbReference type="FunCoup" id="Q925H2">
    <property type="interactions" value="59"/>
</dbReference>
<dbReference type="STRING" id="10090.ENSMUSP00000132718"/>
<dbReference type="PaxDb" id="10090-ENSMUSP00000132718"/>
<dbReference type="AGR" id="MGI:2157755"/>
<dbReference type="MGI" id="MGI:2157755">
    <property type="gene designation" value="Krtap19-1"/>
</dbReference>
<dbReference type="eggNOG" id="ENOG502TDPA">
    <property type="taxonomic scope" value="Eukaryota"/>
</dbReference>
<dbReference type="InParanoid" id="Q925H2"/>
<dbReference type="Reactome" id="R-MMU-6805567">
    <property type="pathway name" value="Keratinization"/>
</dbReference>
<dbReference type="ChiTaRS" id="Krtap19-1">
    <property type="organism name" value="mouse"/>
</dbReference>
<dbReference type="PRO" id="PR:Q925H2"/>
<dbReference type="Proteomes" id="UP000000589">
    <property type="component" value="Unplaced"/>
</dbReference>
<dbReference type="RNAct" id="Q925H2">
    <property type="molecule type" value="protein"/>
</dbReference>
<dbReference type="GO" id="GO:0005829">
    <property type="term" value="C:cytosol"/>
    <property type="evidence" value="ECO:0007669"/>
    <property type="project" value="UniProtKB-ARBA"/>
</dbReference>
<dbReference type="GO" id="GO:0005882">
    <property type="term" value="C:intermediate filament"/>
    <property type="evidence" value="ECO:0007669"/>
    <property type="project" value="UniProtKB-KW"/>
</dbReference>
<dbReference type="InterPro" id="IPR021743">
    <property type="entry name" value="KRTAP_type8/19/20/21/22"/>
</dbReference>
<dbReference type="InterPro" id="IPR051528">
    <property type="entry name" value="KRTAP_type_19"/>
</dbReference>
<dbReference type="PANTHER" id="PTHR38140">
    <property type="entry name" value="KERATIN-ASSOCIATED PROTEIN 19-3-RELATED"/>
    <property type="match status" value="1"/>
</dbReference>
<dbReference type="PANTHER" id="PTHR38140:SF5">
    <property type="entry name" value="KERATIN-ASSOCIATED PROTEIN 19-4-RELATED"/>
    <property type="match status" value="1"/>
</dbReference>
<dbReference type="Pfam" id="PF11759">
    <property type="entry name" value="KRTAP"/>
    <property type="match status" value="1"/>
</dbReference>